<feature type="signal peptide" evidence="2">
    <location>
        <begin position="1"/>
        <end position="22"/>
    </location>
</feature>
<feature type="peptide" id="PRO_0000428677" description="Peptide Ctri9610">
    <location>
        <begin position="23"/>
        <end position="41"/>
    </location>
</feature>
<feature type="propeptide" id="PRO_0000428678" evidence="1">
    <location>
        <begin position="42"/>
        <end position="75"/>
    </location>
</feature>
<feature type="modified residue" description="Lysine amide" evidence="1">
    <location>
        <position position="41"/>
    </location>
</feature>
<sequence>MNSKYLFVFLILNVIFIDLCQGFLFNVIPHAINATASLIKKGTRRRELGSQYDYLQDFRKRELDLDDLLSKFPDY</sequence>
<comment type="subcellular location">
    <subcellularLocation>
        <location evidence="1">Secreted</location>
    </subcellularLocation>
</comment>
<comment type="tissue specificity">
    <text evidence="4">Expressed by the venom gland.</text>
</comment>
<comment type="miscellaneous">
    <text evidence="5">Shows a low ability to inhibit hepatitis C virus (HCV) infection in Huh7.5.1 cells.</text>
</comment>
<comment type="similarity">
    <text evidence="4">Belongs to the non-disulfide-bridged peptide (NDBP) superfamily. Short antimicrobial peptide (group 4) family.</text>
</comment>
<dbReference type="SMR" id="P0DME2"/>
<dbReference type="GO" id="GO:0005576">
    <property type="term" value="C:extracellular region"/>
    <property type="evidence" value="ECO:0007669"/>
    <property type="project" value="UniProtKB-SubCell"/>
</dbReference>
<dbReference type="GO" id="GO:0050688">
    <property type="term" value="P:regulation of defense response to virus"/>
    <property type="evidence" value="ECO:0007669"/>
    <property type="project" value="UniProtKB-KW"/>
</dbReference>
<reference key="1">
    <citation type="journal article" date="2013" name="Biomaterials">
        <title>Design of histidine-rich peptides with enhanced bioavailability and inhibitory activity against hepatitis C virus.</title>
        <authorList>
            <person name="Hong W."/>
            <person name="Zhang R."/>
            <person name="Di Z."/>
            <person name="He Y."/>
            <person name="Zhao Z."/>
            <person name="Hu J."/>
            <person name="Wu Y."/>
            <person name="Li W."/>
            <person name="Cao Z."/>
        </authorList>
    </citation>
    <scope>NUCLEOTIDE SEQUENCE [MRNA]</scope>
    <scope>SYNTHESIS OF 23-41</scope>
    <source>
        <tissue>Venom gland</tissue>
    </source>
</reference>
<proteinExistence type="inferred from homology"/>
<accession>P0DME2</accession>
<evidence type="ECO:0000250" key="1"/>
<evidence type="ECO:0000255" key="2"/>
<evidence type="ECO:0000303" key="3">
    <source>
    </source>
</evidence>
<evidence type="ECO:0000305" key="4"/>
<evidence type="ECO:0000305" key="5">
    <source>
    </source>
</evidence>
<protein>
    <recommendedName>
        <fullName evidence="3">Peptide Ctri9610</fullName>
    </recommendedName>
</protein>
<keyword id="KW-0027">Amidation</keyword>
<keyword id="KW-0929">Antimicrobial</keyword>
<keyword id="KW-0930">Antiviral protein</keyword>
<keyword id="KW-0964">Secreted</keyword>
<keyword id="KW-0732">Signal</keyword>
<organism>
    <name type="scientific">Chaerilus tricostatus</name>
    <name type="common">Scorpion</name>
    <dbReference type="NCBI Taxonomy" id="1055734"/>
    <lineage>
        <taxon>Eukaryota</taxon>
        <taxon>Metazoa</taxon>
        <taxon>Ecdysozoa</taxon>
        <taxon>Arthropoda</taxon>
        <taxon>Chelicerata</taxon>
        <taxon>Arachnida</taxon>
        <taxon>Scorpiones</taxon>
        <taxon>Chaerilida</taxon>
        <taxon>Chaeriloidea</taxon>
        <taxon>Chaerilidae</taxon>
        <taxon>Chaerilus</taxon>
    </lineage>
</organism>
<name>NDB4P_CHATC</name>